<comment type="function">
    <text evidence="1">Involved in the import of serine and threonine into the cell, with the concomitant import of sodium (symport system).</text>
</comment>
<comment type="catalytic activity">
    <reaction evidence="1">
        <text>L-serine(in) + Na(+)(in) = L-serine(out) + Na(+)(out)</text>
        <dbReference type="Rhea" id="RHEA:29575"/>
        <dbReference type="ChEBI" id="CHEBI:29101"/>
        <dbReference type="ChEBI" id="CHEBI:33384"/>
    </reaction>
    <physiologicalReaction direction="right-to-left" evidence="1">
        <dbReference type="Rhea" id="RHEA:29577"/>
    </physiologicalReaction>
</comment>
<comment type="catalytic activity">
    <reaction evidence="1">
        <text>L-threonine(in) + Na(+)(in) = L-threonine(out) + Na(+)(out)</text>
        <dbReference type="Rhea" id="RHEA:69999"/>
        <dbReference type="ChEBI" id="CHEBI:29101"/>
        <dbReference type="ChEBI" id="CHEBI:57926"/>
    </reaction>
    <physiologicalReaction direction="right-to-left" evidence="1">
        <dbReference type="Rhea" id="RHEA:70001"/>
    </physiologicalReaction>
</comment>
<comment type="subcellular location">
    <subcellularLocation>
        <location evidence="1">Cell inner membrane</location>
        <topology evidence="1">Multi-pass membrane protein</topology>
    </subcellularLocation>
</comment>
<comment type="similarity">
    <text evidence="1">Belongs to the dicarboxylate/amino acid:cation symporter (DAACS) (TC 2.A.23) family.</text>
</comment>
<feature type="initiator methionine" description="Removed" evidence="1">
    <location>
        <position position="1"/>
    </location>
</feature>
<feature type="chain" id="PRO_0000309086" description="Serine/threonine transporter SstT">
    <location>
        <begin position="2"/>
        <end position="414"/>
    </location>
</feature>
<feature type="topological domain" description="Cytoplasmic" evidence="1">
    <location>
        <begin position="2"/>
        <end position="15"/>
    </location>
</feature>
<feature type="transmembrane region" description="Helical" evidence="1">
    <location>
        <begin position="16"/>
        <end position="36"/>
    </location>
</feature>
<feature type="topological domain" description="Periplasmic" evidence="1">
    <location>
        <begin position="37"/>
        <end position="45"/>
    </location>
</feature>
<feature type="transmembrane region" description="Helical" evidence="1">
    <location>
        <begin position="46"/>
        <end position="66"/>
    </location>
</feature>
<feature type="topological domain" description="Cytoplasmic" evidence="1">
    <location>
        <begin position="67"/>
        <end position="83"/>
    </location>
</feature>
<feature type="transmembrane region" description="Helical" evidence="1">
    <location>
        <begin position="84"/>
        <end position="104"/>
    </location>
</feature>
<feature type="topological domain" description="Periplasmic" evidence="1">
    <location>
        <begin position="105"/>
        <end position="142"/>
    </location>
</feature>
<feature type="transmembrane region" description="Helical" evidence="1">
    <location>
        <begin position="143"/>
        <end position="163"/>
    </location>
</feature>
<feature type="topological domain" description="Cytoplasmic" evidence="1">
    <location>
        <begin position="164"/>
        <end position="179"/>
    </location>
</feature>
<feature type="transmembrane region" description="Helical" evidence="1">
    <location>
        <begin position="180"/>
        <end position="200"/>
    </location>
</feature>
<feature type="topological domain" description="Periplasmic" evidence="1">
    <location>
        <begin position="201"/>
        <end position="217"/>
    </location>
</feature>
<feature type="transmembrane region" description="Helical" evidence="1">
    <location>
        <begin position="218"/>
        <end position="238"/>
    </location>
</feature>
<feature type="topological domain" description="Cytoplasmic" evidence="1">
    <location>
        <begin position="239"/>
        <end position="299"/>
    </location>
</feature>
<feature type="transmembrane region" description="Helical" evidence="1">
    <location>
        <begin position="300"/>
        <end position="320"/>
    </location>
</feature>
<feature type="topological domain" description="Periplasmic" evidence="1">
    <location>
        <begin position="321"/>
        <end position="331"/>
    </location>
</feature>
<feature type="transmembrane region" description="Helical" evidence="1">
    <location>
        <begin position="332"/>
        <end position="352"/>
    </location>
</feature>
<feature type="topological domain" description="Cytoplasmic" evidence="1">
    <location>
        <begin position="353"/>
        <end position="414"/>
    </location>
</feature>
<name>SSTT_ECOUT</name>
<gene>
    <name evidence="1" type="primary">sstT</name>
    <name type="ordered locus">UTI89_C3527</name>
</gene>
<sequence>MTTQHSPGLFRRLAHGSLVKQILAGLILGILLAWISKPAAEAVGLLGTLFVGALKAVAPILVLMLVMASIANHQHGQKTNIRPILFLYLLGTFSAALAAVIFSFAFPSTLHLSSSAGDISPPSGIVEVMRGLVMSMVSNPIDALLKGNYIGILVWAIGLGFALRHGNETTKNLVNDMSNAVTFMVKLVIHFAPIGIFGLVSSTLATTGFSTLWGYAQLLVVLVGCMLLVALVVNPLLVWWKIRRNPFPLVLLCLRESGVYAFFTRSSAANIPVNMALCEKLNLDRDTYSVSIPLGATINMAGAAITITVLTLAAVNTLGIPVDLPTALLLSVVASLCACGASGVAGGSLLLIPLACNMFGISNDIAMQVVAVGFIIGVLQDSCETALNSSTDVLFTAAACQAEDDRLANSALRN</sequence>
<dbReference type="EMBL" id="CP000243">
    <property type="protein sequence ID" value="ABE08973.1"/>
    <property type="molecule type" value="Genomic_DNA"/>
</dbReference>
<dbReference type="RefSeq" id="WP_000211386.1">
    <property type="nucleotide sequence ID" value="NZ_CP064825.1"/>
</dbReference>
<dbReference type="SMR" id="Q1R6P1"/>
<dbReference type="KEGG" id="eci:UTI89_C3527"/>
<dbReference type="HOGENOM" id="CLU_044581_0_0_6"/>
<dbReference type="Proteomes" id="UP000001952">
    <property type="component" value="Chromosome"/>
</dbReference>
<dbReference type="GO" id="GO:0005886">
    <property type="term" value="C:plasma membrane"/>
    <property type="evidence" value="ECO:0007669"/>
    <property type="project" value="UniProtKB-SubCell"/>
</dbReference>
<dbReference type="GO" id="GO:0005295">
    <property type="term" value="F:neutral L-amino acid:sodium symporter activity"/>
    <property type="evidence" value="ECO:0007669"/>
    <property type="project" value="TreeGrafter"/>
</dbReference>
<dbReference type="GO" id="GO:0032329">
    <property type="term" value="P:serine transport"/>
    <property type="evidence" value="ECO:0007669"/>
    <property type="project" value="InterPro"/>
</dbReference>
<dbReference type="GO" id="GO:0015826">
    <property type="term" value="P:threonine transport"/>
    <property type="evidence" value="ECO:0007669"/>
    <property type="project" value="InterPro"/>
</dbReference>
<dbReference type="FunFam" id="1.10.3860.10:FF:000003">
    <property type="entry name" value="Serine/threonine transporter sstT"/>
    <property type="match status" value="1"/>
</dbReference>
<dbReference type="Gene3D" id="1.10.3860.10">
    <property type="entry name" value="Sodium:dicarboxylate symporter"/>
    <property type="match status" value="1"/>
</dbReference>
<dbReference type="HAMAP" id="MF_01582">
    <property type="entry name" value="Ser_Thr_transp_SstT"/>
    <property type="match status" value="1"/>
</dbReference>
<dbReference type="InterPro" id="IPR001991">
    <property type="entry name" value="Na-dicarboxylate_symporter"/>
</dbReference>
<dbReference type="InterPro" id="IPR036458">
    <property type="entry name" value="Na:dicarbo_symporter_sf"/>
</dbReference>
<dbReference type="InterPro" id="IPR023025">
    <property type="entry name" value="Ser_Thr_transp_SstT"/>
</dbReference>
<dbReference type="NCBIfam" id="NF010151">
    <property type="entry name" value="PRK13628.1"/>
    <property type="match status" value="1"/>
</dbReference>
<dbReference type="PANTHER" id="PTHR42865">
    <property type="entry name" value="PROTON/GLUTAMATE-ASPARTATE SYMPORTER"/>
    <property type="match status" value="1"/>
</dbReference>
<dbReference type="PANTHER" id="PTHR42865:SF8">
    <property type="entry name" value="SERINE_THREONINE TRANSPORTER SSTT"/>
    <property type="match status" value="1"/>
</dbReference>
<dbReference type="Pfam" id="PF00375">
    <property type="entry name" value="SDF"/>
    <property type="match status" value="1"/>
</dbReference>
<dbReference type="PRINTS" id="PR00173">
    <property type="entry name" value="EDTRNSPORT"/>
</dbReference>
<dbReference type="SUPFAM" id="SSF118215">
    <property type="entry name" value="Proton glutamate symport protein"/>
    <property type="match status" value="1"/>
</dbReference>
<dbReference type="PROSITE" id="PS00713">
    <property type="entry name" value="NA_DICARBOXYL_SYMP_1"/>
    <property type="match status" value="1"/>
</dbReference>
<protein>
    <recommendedName>
        <fullName evidence="1">Serine/threonine transporter SstT</fullName>
    </recommendedName>
    <alternativeName>
        <fullName evidence="1">Na(+)/serine-threonine symporter</fullName>
    </alternativeName>
</protein>
<accession>Q1R6P1</accession>
<evidence type="ECO:0000255" key="1">
    <source>
        <dbReference type="HAMAP-Rule" id="MF_01582"/>
    </source>
</evidence>
<keyword id="KW-0029">Amino-acid transport</keyword>
<keyword id="KW-0997">Cell inner membrane</keyword>
<keyword id="KW-1003">Cell membrane</keyword>
<keyword id="KW-0472">Membrane</keyword>
<keyword id="KW-0769">Symport</keyword>
<keyword id="KW-0812">Transmembrane</keyword>
<keyword id="KW-1133">Transmembrane helix</keyword>
<keyword id="KW-0813">Transport</keyword>
<proteinExistence type="inferred from homology"/>
<organism>
    <name type="scientific">Escherichia coli (strain UTI89 / UPEC)</name>
    <dbReference type="NCBI Taxonomy" id="364106"/>
    <lineage>
        <taxon>Bacteria</taxon>
        <taxon>Pseudomonadati</taxon>
        <taxon>Pseudomonadota</taxon>
        <taxon>Gammaproteobacteria</taxon>
        <taxon>Enterobacterales</taxon>
        <taxon>Enterobacteriaceae</taxon>
        <taxon>Escherichia</taxon>
    </lineage>
</organism>
<reference key="1">
    <citation type="journal article" date="2006" name="Proc. Natl. Acad. Sci. U.S.A.">
        <title>Identification of genes subject to positive selection in uropathogenic strains of Escherichia coli: a comparative genomics approach.</title>
        <authorList>
            <person name="Chen S.L."/>
            <person name="Hung C.-S."/>
            <person name="Xu J."/>
            <person name="Reigstad C.S."/>
            <person name="Magrini V."/>
            <person name="Sabo A."/>
            <person name="Blasiar D."/>
            <person name="Bieri T."/>
            <person name="Meyer R.R."/>
            <person name="Ozersky P."/>
            <person name="Armstrong J.R."/>
            <person name="Fulton R.S."/>
            <person name="Latreille J.P."/>
            <person name="Spieth J."/>
            <person name="Hooton T.M."/>
            <person name="Mardis E.R."/>
            <person name="Hultgren S.J."/>
            <person name="Gordon J.I."/>
        </authorList>
    </citation>
    <scope>NUCLEOTIDE SEQUENCE [LARGE SCALE GENOMIC DNA]</scope>
    <source>
        <strain>UTI89 / UPEC</strain>
    </source>
</reference>